<dbReference type="EC" id="1.14.14.-" evidence="3"/>
<dbReference type="EMBL" id="AY341443">
    <property type="protein sequence ID" value="AAR13307.1"/>
    <property type="status" value="ALT_SEQ"/>
    <property type="molecule type" value="Genomic_DNA"/>
</dbReference>
<dbReference type="EMBL" id="CM002295">
    <property type="protein sequence ID" value="ESW11424.1"/>
    <property type="molecule type" value="Genomic_DNA"/>
</dbReference>
<dbReference type="RefSeq" id="XP_007139430.1">
    <property type="nucleotide sequence ID" value="XM_007139368.1"/>
</dbReference>
<dbReference type="SMR" id="Q69F95"/>
<dbReference type="STRING" id="3885.V7B0S8"/>
<dbReference type="EnsemblPlants" id="ESW11424">
    <property type="protein sequence ID" value="ESW11424"/>
    <property type="gene ID" value="PHAVU_008G028800g"/>
</dbReference>
<dbReference type="Gramene" id="ESW11424">
    <property type="protein sequence ID" value="ESW11424"/>
    <property type="gene ID" value="PHAVU_008G028800g"/>
</dbReference>
<dbReference type="eggNOG" id="KOG0157">
    <property type="taxonomic scope" value="Eukaryota"/>
</dbReference>
<dbReference type="OMA" id="SIAQPFM"/>
<dbReference type="OrthoDB" id="1372046at2759"/>
<dbReference type="Proteomes" id="UP000000226">
    <property type="component" value="Chromosome 8"/>
</dbReference>
<dbReference type="GO" id="GO:0016020">
    <property type="term" value="C:membrane"/>
    <property type="evidence" value="ECO:0007669"/>
    <property type="project" value="UniProtKB-SubCell"/>
</dbReference>
<dbReference type="GO" id="GO:0020037">
    <property type="term" value="F:heme binding"/>
    <property type="evidence" value="ECO:0007669"/>
    <property type="project" value="InterPro"/>
</dbReference>
<dbReference type="GO" id="GO:0005506">
    <property type="term" value="F:iron ion binding"/>
    <property type="evidence" value="ECO:0007669"/>
    <property type="project" value="InterPro"/>
</dbReference>
<dbReference type="GO" id="GO:0004497">
    <property type="term" value="F:monooxygenase activity"/>
    <property type="evidence" value="ECO:0007669"/>
    <property type="project" value="UniProtKB-KW"/>
</dbReference>
<dbReference type="GO" id="GO:0016705">
    <property type="term" value="F:oxidoreductase activity, acting on paired donors, with incorporation or reduction of molecular oxygen"/>
    <property type="evidence" value="ECO:0007669"/>
    <property type="project" value="InterPro"/>
</dbReference>
<dbReference type="GO" id="GO:0016132">
    <property type="term" value="P:brassinosteroid biosynthetic process"/>
    <property type="evidence" value="ECO:0007669"/>
    <property type="project" value="TreeGrafter"/>
</dbReference>
<dbReference type="GO" id="GO:0010268">
    <property type="term" value="P:brassinosteroid homeostasis"/>
    <property type="evidence" value="ECO:0007669"/>
    <property type="project" value="TreeGrafter"/>
</dbReference>
<dbReference type="GO" id="GO:0016125">
    <property type="term" value="P:sterol metabolic process"/>
    <property type="evidence" value="ECO:0007669"/>
    <property type="project" value="TreeGrafter"/>
</dbReference>
<dbReference type="CDD" id="cd11043">
    <property type="entry name" value="CYP90-like"/>
    <property type="match status" value="1"/>
</dbReference>
<dbReference type="FunFam" id="1.10.630.10:FF:000045">
    <property type="entry name" value="Cytochrome P450 85A1"/>
    <property type="match status" value="1"/>
</dbReference>
<dbReference type="Gene3D" id="1.10.630.10">
    <property type="entry name" value="Cytochrome P450"/>
    <property type="match status" value="1"/>
</dbReference>
<dbReference type="InterPro" id="IPR001128">
    <property type="entry name" value="Cyt_P450"/>
</dbReference>
<dbReference type="InterPro" id="IPR017972">
    <property type="entry name" value="Cyt_P450_CS"/>
</dbReference>
<dbReference type="InterPro" id="IPR002401">
    <property type="entry name" value="Cyt_P450_E_grp-I"/>
</dbReference>
<dbReference type="InterPro" id="IPR036396">
    <property type="entry name" value="Cyt_P450_sf"/>
</dbReference>
<dbReference type="PANTHER" id="PTHR24286">
    <property type="entry name" value="CYTOCHROME P450 26"/>
    <property type="match status" value="1"/>
</dbReference>
<dbReference type="PANTHER" id="PTHR24286:SF388">
    <property type="entry name" value="CYTOCHROME P450 85A"/>
    <property type="match status" value="1"/>
</dbReference>
<dbReference type="Pfam" id="PF00067">
    <property type="entry name" value="p450"/>
    <property type="match status" value="1"/>
</dbReference>
<dbReference type="PRINTS" id="PR00463">
    <property type="entry name" value="EP450I"/>
</dbReference>
<dbReference type="PRINTS" id="PR00385">
    <property type="entry name" value="P450"/>
</dbReference>
<dbReference type="SUPFAM" id="SSF48264">
    <property type="entry name" value="Cytochrome P450"/>
    <property type="match status" value="1"/>
</dbReference>
<dbReference type="PROSITE" id="PS00086">
    <property type="entry name" value="CYTOCHROME_P450"/>
    <property type="match status" value="1"/>
</dbReference>
<protein>
    <recommendedName>
        <fullName evidence="5">Cytochrome P450 85A</fullName>
        <shortName evidence="5">PvCYP85A</shortName>
        <ecNumber evidence="3">1.14.14.-</ecNumber>
    </recommendedName>
    <alternativeName>
        <fullName evidence="3">C6-oxidase</fullName>
    </alternativeName>
</protein>
<keyword id="KW-0349">Heme</keyword>
<keyword id="KW-0408">Iron</keyword>
<keyword id="KW-0472">Membrane</keyword>
<keyword id="KW-0479">Metal-binding</keyword>
<keyword id="KW-0503">Monooxygenase</keyword>
<keyword id="KW-0560">Oxidoreductase</keyword>
<keyword id="KW-1185">Reference proteome</keyword>
<keyword id="KW-0812">Transmembrane</keyword>
<keyword id="KW-1133">Transmembrane helix</keyword>
<accession>Q69F95</accession>
<accession>V7B0S8</accession>
<feature type="chain" id="PRO_0000052173" description="Cytochrome P450 85A">
    <location>
        <begin position="1"/>
        <end position="466"/>
    </location>
</feature>
<feature type="transmembrane region" description="Helical" evidence="4">
    <location>
        <begin position="2"/>
        <end position="22"/>
    </location>
</feature>
<feature type="binding site" description="axial binding residue" evidence="2">
    <location>
        <position position="414"/>
    </location>
    <ligand>
        <name>heme</name>
        <dbReference type="ChEBI" id="CHEBI:30413"/>
    </ligand>
    <ligandPart>
        <name>Fe</name>
        <dbReference type="ChEBI" id="CHEBI:18248"/>
    </ligandPart>
</feature>
<feature type="sequence conflict" description="In Ref. 1; AAR13307." evidence="6" ref="1">
    <original>L</original>
    <variation>F</variation>
    <location>
        <position position="17"/>
    </location>
</feature>
<feature type="sequence conflict" description="In Ref. 1; AAR13307." evidence="6" ref="1">
    <original>R</original>
    <variation>Q</variation>
    <location>
        <position position="232"/>
    </location>
</feature>
<feature type="sequence conflict" description="In Ref. 1; AAR13307." evidence="6" ref="1">
    <original>N</original>
    <variation>S</variation>
    <location>
        <position position="262"/>
    </location>
</feature>
<gene>
    <name evidence="5" type="primary">CYP85A</name>
    <name evidence="7" type="ordered locus">PHAVU_008G028800g</name>
    <name evidence="5" type="ORF">BA13</name>
</gene>
<organism>
    <name type="scientific">Phaseolus vulgaris</name>
    <name type="common">Kidney bean</name>
    <name type="synonym">French bean</name>
    <dbReference type="NCBI Taxonomy" id="3885"/>
    <lineage>
        <taxon>Eukaryota</taxon>
        <taxon>Viridiplantae</taxon>
        <taxon>Streptophyta</taxon>
        <taxon>Embryophyta</taxon>
        <taxon>Tracheophyta</taxon>
        <taxon>Spermatophyta</taxon>
        <taxon>Magnoliopsida</taxon>
        <taxon>eudicotyledons</taxon>
        <taxon>Gunneridae</taxon>
        <taxon>Pentapetalae</taxon>
        <taxon>rosids</taxon>
        <taxon>fabids</taxon>
        <taxon>Fabales</taxon>
        <taxon>Fabaceae</taxon>
        <taxon>Papilionoideae</taxon>
        <taxon>50 kb inversion clade</taxon>
        <taxon>NPAAA clade</taxon>
        <taxon>indigoferoid/millettioid clade</taxon>
        <taxon>Phaseoleae</taxon>
        <taxon>Phaseolus</taxon>
    </lineage>
</organism>
<comment type="function">
    <text evidence="1">Catalyzes the C6-oxidation step in brassinosteroids biosynthesis.</text>
</comment>
<comment type="cofactor">
    <cofactor evidence="2">
        <name>heme</name>
        <dbReference type="ChEBI" id="CHEBI:30413"/>
    </cofactor>
</comment>
<comment type="subcellular location">
    <subcellularLocation>
        <location evidence="4">Membrane</location>
        <topology evidence="4">Single-pass membrane protein</topology>
    </subcellularLocation>
</comment>
<comment type="similarity">
    <text evidence="6">Belongs to the cytochrome P450 family.</text>
</comment>
<comment type="sequence caution" evidence="6">
    <conflict type="erroneous gene model prediction">
        <sequence resource="EMBL-CDS" id="AAR13307"/>
    </conflict>
</comment>
<proteinExistence type="inferred from homology"/>
<evidence type="ECO:0000250" key="1"/>
<evidence type="ECO:0000250" key="2">
    <source>
        <dbReference type="UniProtKB" id="P04798"/>
    </source>
</evidence>
<evidence type="ECO:0000250" key="3">
    <source>
        <dbReference type="UniProtKB" id="Q9FMA5"/>
    </source>
</evidence>
<evidence type="ECO:0000255" key="4"/>
<evidence type="ECO:0000303" key="5">
    <source>
    </source>
</evidence>
<evidence type="ECO:0000305" key="6"/>
<evidence type="ECO:0000312" key="7">
    <source>
        <dbReference type="EMBL" id="ESW11424.1"/>
    </source>
</evidence>
<reference key="1">
    <citation type="journal article" date="2004" name="Theor. Appl. Genet.">
        <title>The anthracnose resistance locus Co-4 of common bean is located on chromosome 3 and contains putative disease resistance-related genes.</title>
        <authorList>
            <person name="Melotto M."/>
            <person name="Coelho M.F."/>
            <person name="Pedrosa-Harand A."/>
            <person name="Kelly J.D."/>
            <person name="Camargo L.E."/>
        </authorList>
    </citation>
    <scope>NUCLEOTIDE SEQUENCE [LARGE SCALE GENOMIC DNA]</scope>
</reference>
<reference key="2">
    <citation type="journal article" date="2014" name="Nat. Genet.">
        <title>A reference genome for common bean and genome-wide analysis of dual domestications.</title>
        <authorList>
            <person name="Schmutz J."/>
            <person name="McClean P.E."/>
            <person name="Mamidi S."/>
            <person name="Wu G.A."/>
            <person name="Cannon S.B."/>
            <person name="Grimwood J."/>
            <person name="Jenkins J."/>
            <person name="Shu S."/>
            <person name="Song Q."/>
            <person name="Chavarro C."/>
            <person name="Torres-Torres M."/>
            <person name="Geffroy V."/>
            <person name="Moghaddam S.M."/>
            <person name="Gao D."/>
            <person name="Abernathy B."/>
            <person name="Barry K."/>
            <person name="Blair M."/>
            <person name="Brick M.A."/>
            <person name="Chovatia M."/>
            <person name="Gepts P."/>
            <person name="Goodstein D.M."/>
            <person name="Gonzales M."/>
            <person name="Hellsten U."/>
            <person name="Hyten D.L."/>
            <person name="Jia G."/>
            <person name="Kelly J.D."/>
            <person name="Kudrna D."/>
            <person name="Lee R."/>
            <person name="Richard M.M."/>
            <person name="Miklas P.N."/>
            <person name="Osorno J.M."/>
            <person name="Rodrigues J."/>
            <person name="Thareau V."/>
            <person name="Urrea C.A."/>
            <person name="Wang M."/>
            <person name="Yu Y."/>
            <person name="Zhang M."/>
            <person name="Wing R.A."/>
            <person name="Cregan P.B."/>
            <person name="Rokhsar D.S."/>
            <person name="Jackson S.A."/>
        </authorList>
    </citation>
    <scope>NUCLEOTIDE SEQUENCE [LARGE SCALE GENOMIC DNA]</scope>
    <source>
        <strain>cv. G19833</strain>
    </source>
</reference>
<sequence length="466" mass="53541">MALFMAILGVLVLLLCLCSALLKWNEVRFRRKGLPPGAMGWPVFGETTEFLKQGPNFMKNKRARYGSFFKSHILGCPTIVSMDPELNRFILMNEAKGLVPGYPQSMLDILGTRNIAAVHGSTHKYMRGALLSIISPTLIRDQLLPKIDEFMRTHLMDWDNKVINIQEKTKEMAFLSSLKQIAGMESSSIAQPFMTEFFKLVLGTLSLPINLPRTNYRGGLQARKSIISILSRLLEERKASQDVHVDMLGCLMKKDENRYKLNDEEIIDLVITIMYSGYETVSTTSMMAVKYLHDHPKVLEEIRKEHFAIRERKKPEDPIDCNDLKSMRFTRAVIFETSRLATIVNGVLRKTTHDMELNGYLIPKGWRIYVYTREINYDPFLYHDPLTFNPWRWLGNSLESQSHFLIFGGGTRQCPGKELGIAEISTFLHYFVTRYRWEEVGGDKLMKFPRVVAPNGLHIRVSSFSN</sequence>
<name>C85A_PHAVU</name>